<organism>
    <name type="scientific">Neisseria meningitidis serogroup A / serotype 4A (strain DSM 15465 / Z2491)</name>
    <dbReference type="NCBI Taxonomy" id="122587"/>
    <lineage>
        <taxon>Bacteria</taxon>
        <taxon>Pseudomonadati</taxon>
        <taxon>Pseudomonadota</taxon>
        <taxon>Betaproteobacteria</taxon>
        <taxon>Neisseriales</taxon>
        <taxon>Neisseriaceae</taxon>
        <taxon>Neisseria</taxon>
    </lineage>
</organism>
<gene>
    <name type="ordered locus">NMA2160</name>
</gene>
<accession>A1ITY7</accession>
<sequence>MNFSFAPLFLVTLILLGVVSNNNSITISATILLLMQQTALIQFVPLVEKHGLNLGIILLTIGVLSPLVSGKAQVPPVAEFLNFKMISAVFIGIFVAWLAGRGVPLMGQQPVLITGLLIGTVIGVAFMGGIPVGPLIAAGILSFVVGKG</sequence>
<reference key="1">
    <citation type="journal article" date="2000" name="Nature">
        <title>Complete DNA sequence of a serogroup A strain of Neisseria meningitidis Z2491.</title>
        <authorList>
            <person name="Parkhill J."/>
            <person name="Achtman M."/>
            <person name="James K.D."/>
            <person name="Bentley S.D."/>
            <person name="Churcher C.M."/>
            <person name="Klee S.R."/>
            <person name="Morelli G."/>
            <person name="Basham D."/>
            <person name="Brown D."/>
            <person name="Chillingworth T."/>
            <person name="Davies R.M."/>
            <person name="Davis P."/>
            <person name="Devlin K."/>
            <person name="Feltwell T."/>
            <person name="Hamlin N."/>
            <person name="Holroyd S."/>
            <person name="Jagels K."/>
            <person name="Leather S."/>
            <person name="Moule S."/>
            <person name="Mungall K.L."/>
            <person name="Quail M.A."/>
            <person name="Rajandream M.A."/>
            <person name="Rutherford K.M."/>
            <person name="Simmonds M."/>
            <person name="Skelton J."/>
            <person name="Whitehead S."/>
            <person name="Spratt B.G."/>
            <person name="Barrell B.G."/>
        </authorList>
    </citation>
    <scope>NUCLEOTIDE SEQUENCE [LARGE SCALE GENOMIC DNA]</scope>
    <source>
        <strain>DSM 15465 / Z2491</strain>
    </source>
</reference>
<proteinExistence type="inferred from homology"/>
<protein>
    <recommendedName>
        <fullName evidence="1">UPF0756 membrane protein NMA2160</fullName>
    </recommendedName>
</protein>
<evidence type="ECO:0000255" key="1">
    <source>
        <dbReference type="HAMAP-Rule" id="MF_01874"/>
    </source>
</evidence>
<feature type="chain" id="PRO_0000388910" description="UPF0756 membrane protein NMA2160">
    <location>
        <begin position="1"/>
        <end position="148"/>
    </location>
</feature>
<feature type="transmembrane region" description="Helical" evidence="1">
    <location>
        <begin position="13"/>
        <end position="35"/>
    </location>
</feature>
<feature type="transmembrane region" description="Helical" evidence="1">
    <location>
        <begin position="50"/>
        <end position="70"/>
    </location>
</feature>
<feature type="transmembrane region" description="Helical" evidence="1">
    <location>
        <begin position="80"/>
        <end position="100"/>
    </location>
</feature>
<feature type="transmembrane region" description="Helical" evidence="1">
    <location>
        <begin position="121"/>
        <end position="141"/>
    </location>
</feature>
<keyword id="KW-1003">Cell membrane</keyword>
<keyword id="KW-0472">Membrane</keyword>
<keyword id="KW-0812">Transmembrane</keyword>
<keyword id="KW-1133">Transmembrane helix</keyword>
<comment type="subcellular location">
    <subcellularLocation>
        <location evidence="1">Cell membrane</location>
        <topology evidence="1">Multi-pass membrane protein</topology>
    </subcellularLocation>
</comment>
<comment type="similarity">
    <text evidence="1">Belongs to the UPF0756 family.</text>
</comment>
<name>Y2160_NEIMA</name>
<dbReference type="EMBL" id="AL157959">
    <property type="protein sequence ID" value="CAM09256.1"/>
    <property type="molecule type" value="Genomic_DNA"/>
</dbReference>
<dbReference type="PIR" id="E81788">
    <property type="entry name" value="E81788"/>
</dbReference>
<dbReference type="RefSeq" id="WP_002233503.1">
    <property type="nucleotide sequence ID" value="NC_003116.1"/>
</dbReference>
<dbReference type="EnsemblBacteria" id="CAM09256">
    <property type="protein sequence ID" value="CAM09256"/>
    <property type="gene ID" value="NMA2160"/>
</dbReference>
<dbReference type="KEGG" id="nma:NMA2160"/>
<dbReference type="HOGENOM" id="CLU_125889_0_0_4"/>
<dbReference type="Proteomes" id="UP000000626">
    <property type="component" value="Chromosome"/>
</dbReference>
<dbReference type="GO" id="GO:0005886">
    <property type="term" value="C:plasma membrane"/>
    <property type="evidence" value="ECO:0007669"/>
    <property type="project" value="UniProtKB-SubCell"/>
</dbReference>
<dbReference type="HAMAP" id="MF_01874">
    <property type="entry name" value="UPF0756"/>
    <property type="match status" value="1"/>
</dbReference>
<dbReference type="InterPro" id="IPR007382">
    <property type="entry name" value="UPF0756_TM"/>
</dbReference>
<dbReference type="PANTHER" id="PTHR38452">
    <property type="entry name" value="UPF0756 MEMBRANE PROTEIN YEAL"/>
    <property type="match status" value="1"/>
</dbReference>
<dbReference type="PANTHER" id="PTHR38452:SF1">
    <property type="entry name" value="UPF0756 MEMBRANE PROTEIN YEAL"/>
    <property type="match status" value="1"/>
</dbReference>
<dbReference type="Pfam" id="PF04284">
    <property type="entry name" value="DUF441"/>
    <property type="match status" value="1"/>
</dbReference>